<name>CIAO1_VANPO</name>
<dbReference type="EMBL" id="DS480417">
    <property type="protein sequence ID" value="EDO16784.1"/>
    <property type="molecule type" value="Genomic_DNA"/>
</dbReference>
<dbReference type="RefSeq" id="XP_001644642.1">
    <property type="nucleotide sequence ID" value="XM_001644592.1"/>
</dbReference>
<dbReference type="SMR" id="A7TLU2"/>
<dbReference type="FunCoup" id="A7TLU2">
    <property type="interactions" value="82"/>
</dbReference>
<dbReference type="STRING" id="436907.A7TLU2"/>
<dbReference type="GeneID" id="5544943"/>
<dbReference type="KEGG" id="vpo:Kpol_526p37"/>
<dbReference type="eggNOG" id="KOG0645">
    <property type="taxonomic scope" value="Eukaryota"/>
</dbReference>
<dbReference type="HOGENOM" id="CLU_000288_57_8_1"/>
<dbReference type="InParanoid" id="A7TLU2"/>
<dbReference type="OMA" id="IREIRWS"/>
<dbReference type="OrthoDB" id="284782at2759"/>
<dbReference type="PhylomeDB" id="A7TLU2"/>
<dbReference type="Proteomes" id="UP000000267">
    <property type="component" value="Unassembled WGS sequence"/>
</dbReference>
<dbReference type="GO" id="GO:0097361">
    <property type="term" value="C:cytosolic [4Fe-4S] assembly targeting complex"/>
    <property type="evidence" value="ECO:0007669"/>
    <property type="project" value="EnsemblFungi"/>
</dbReference>
<dbReference type="GO" id="GO:0005634">
    <property type="term" value="C:nucleus"/>
    <property type="evidence" value="ECO:0007669"/>
    <property type="project" value="UniProtKB-SubCell"/>
</dbReference>
<dbReference type="GO" id="GO:0016226">
    <property type="term" value="P:iron-sulfur cluster assembly"/>
    <property type="evidence" value="ECO:0007669"/>
    <property type="project" value="UniProtKB-UniRule"/>
</dbReference>
<dbReference type="GO" id="GO:0002098">
    <property type="term" value="P:tRNA wobble uridine modification"/>
    <property type="evidence" value="ECO:0007669"/>
    <property type="project" value="EnsemblFungi"/>
</dbReference>
<dbReference type="CDD" id="cd00200">
    <property type="entry name" value="WD40"/>
    <property type="match status" value="1"/>
</dbReference>
<dbReference type="FunFam" id="2.130.10.10:FF:000705">
    <property type="entry name" value="Probable cytosolic iron-sulfur protein assembly protein 1"/>
    <property type="match status" value="1"/>
</dbReference>
<dbReference type="Gene3D" id="2.130.10.10">
    <property type="entry name" value="YVTN repeat-like/Quinoprotein amine dehydrogenase"/>
    <property type="match status" value="1"/>
</dbReference>
<dbReference type="HAMAP" id="MF_03037">
    <property type="entry name" value="ciao1"/>
    <property type="match status" value="1"/>
</dbReference>
<dbReference type="InterPro" id="IPR028608">
    <property type="entry name" value="CIAO1/Cia1"/>
</dbReference>
<dbReference type="InterPro" id="IPR020472">
    <property type="entry name" value="G-protein_beta_WD-40_rep"/>
</dbReference>
<dbReference type="InterPro" id="IPR015943">
    <property type="entry name" value="WD40/YVTN_repeat-like_dom_sf"/>
</dbReference>
<dbReference type="InterPro" id="IPR036322">
    <property type="entry name" value="WD40_repeat_dom_sf"/>
</dbReference>
<dbReference type="InterPro" id="IPR001680">
    <property type="entry name" value="WD40_rpt"/>
</dbReference>
<dbReference type="PANTHER" id="PTHR19920:SF0">
    <property type="entry name" value="CYTOSOLIC IRON-SULFUR PROTEIN ASSEMBLY PROTEIN CIAO1-RELATED"/>
    <property type="match status" value="1"/>
</dbReference>
<dbReference type="PANTHER" id="PTHR19920">
    <property type="entry name" value="WD40 PROTEIN CIAO1"/>
    <property type="match status" value="1"/>
</dbReference>
<dbReference type="Pfam" id="PF00400">
    <property type="entry name" value="WD40"/>
    <property type="match status" value="6"/>
</dbReference>
<dbReference type="PRINTS" id="PR00320">
    <property type="entry name" value="GPROTEINBRPT"/>
</dbReference>
<dbReference type="SMART" id="SM00320">
    <property type="entry name" value="WD40"/>
    <property type="match status" value="7"/>
</dbReference>
<dbReference type="SUPFAM" id="SSF50978">
    <property type="entry name" value="WD40 repeat-like"/>
    <property type="match status" value="1"/>
</dbReference>
<dbReference type="PROSITE" id="PS00678">
    <property type="entry name" value="WD_REPEATS_1"/>
    <property type="match status" value="1"/>
</dbReference>
<dbReference type="PROSITE" id="PS50082">
    <property type="entry name" value="WD_REPEATS_2"/>
    <property type="match status" value="5"/>
</dbReference>
<dbReference type="PROSITE" id="PS50294">
    <property type="entry name" value="WD_REPEATS_REGION"/>
    <property type="match status" value="1"/>
</dbReference>
<keyword id="KW-0963">Cytoplasm</keyword>
<keyword id="KW-0539">Nucleus</keyword>
<keyword id="KW-1185">Reference proteome</keyword>
<keyword id="KW-0677">Repeat</keyword>
<keyword id="KW-0853">WD repeat</keyword>
<gene>
    <name evidence="1" type="primary">CIA1</name>
    <name type="ORF">Kpol_526p37</name>
</gene>
<proteinExistence type="inferred from homology"/>
<protein>
    <recommendedName>
        <fullName evidence="1">Probable cytosolic iron-sulfur protein assembly protein 1</fullName>
    </recommendedName>
</protein>
<organism>
    <name type="scientific">Vanderwaltozyma polyspora (strain ATCC 22028 / DSM 70294 / BCRC 21397 / CBS 2163 / NBRC 10782 / NRRL Y-8283 / UCD 57-17)</name>
    <name type="common">Kluyveromyces polysporus</name>
    <dbReference type="NCBI Taxonomy" id="436907"/>
    <lineage>
        <taxon>Eukaryota</taxon>
        <taxon>Fungi</taxon>
        <taxon>Dikarya</taxon>
        <taxon>Ascomycota</taxon>
        <taxon>Saccharomycotina</taxon>
        <taxon>Saccharomycetes</taxon>
        <taxon>Saccharomycetales</taxon>
        <taxon>Saccharomycetaceae</taxon>
        <taxon>Vanderwaltozyma</taxon>
    </lineage>
</organism>
<reference key="1">
    <citation type="journal article" date="2007" name="Proc. Natl. Acad. Sci. U.S.A.">
        <title>Independent sorting-out of thousands of duplicated gene pairs in two yeast species descended from a whole-genome duplication.</title>
        <authorList>
            <person name="Scannell D.R."/>
            <person name="Frank A.C."/>
            <person name="Conant G.C."/>
            <person name="Byrne K.P."/>
            <person name="Woolfit M."/>
            <person name="Wolfe K.H."/>
        </authorList>
    </citation>
    <scope>NUCLEOTIDE SEQUENCE [LARGE SCALE GENOMIC DNA]</scope>
    <source>
        <strain>ATCC 22028 / DSM 70294 / BCRC 21397 / CBS 2163 / NBRC 10782 / NRRL Y-8283 / UCD 57-17</strain>
    </source>
</reference>
<evidence type="ECO:0000255" key="1">
    <source>
        <dbReference type="HAMAP-Rule" id="MF_03037"/>
    </source>
</evidence>
<feature type="chain" id="PRO_0000382528" description="Probable cytosolic iron-sulfur protein assembly protein 1">
    <location>
        <begin position="1"/>
        <end position="347"/>
    </location>
</feature>
<feature type="repeat" description="WD 1">
    <location>
        <begin position="11"/>
        <end position="48"/>
    </location>
</feature>
<feature type="repeat" description="WD 2">
    <location>
        <begin position="62"/>
        <end position="101"/>
    </location>
</feature>
<feature type="repeat" description="WD 3">
    <location>
        <begin position="122"/>
        <end position="161"/>
    </location>
</feature>
<feature type="repeat" description="WD 4">
    <location>
        <begin position="168"/>
        <end position="207"/>
    </location>
</feature>
<feature type="repeat" description="WD 5">
    <location>
        <begin position="212"/>
        <end position="255"/>
    </location>
</feature>
<feature type="repeat" description="WD 6">
    <location>
        <begin position="266"/>
        <end position="304"/>
    </location>
</feature>
<feature type="repeat" description="WD 7">
    <location>
        <begin position="311"/>
        <end position="347"/>
    </location>
</feature>
<sequence>MSLNLVKALKLHNEKIWDIDCYKGLLATASTDRRIKIVNIGDIGDGLVSDDGRLLDELDDSSHKKTVRSVAWRPHSTILAAGSFDSTVSIWAKDENDGDADGDGGVDDPSSFSMELLAVIEGHENEVKSVAWSKDGYFLATCSRDKSVWIWESDEMGEEYECISVLQEHSQDVKHVVWHPFKDILASSSYDDTIRIWKEYDDDWEAAAVLKGHEGTVWGSDFEKNVNTDIVRLCSGSDDTTVKIWRCVSNESIEEDWICEATLPNVHGKPVYSVSWSEDGLIASAGSDGMLVIYKENKDNVWEVVAKHEHSHSIYEINVVKWIKLNNGKSYLATAGDDGYVNIWAYN</sequence>
<accession>A7TLU2</accession>
<comment type="function">
    <text evidence="1">Essential component of the cytosolic iron-sulfur (Fe/S) protein assembly machinery. Required for the maturation of extramitochondrial Fe/S proteins.</text>
</comment>
<comment type="subunit">
    <text evidence="1">Interacts with NAR1.</text>
</comment>
<comment type="subcellular location">
    <subcellularLocation>
        <location evidence="1">Cytoplasm</location>
    </subcellularLocation>
    <subcellularLocation>
        <location evidence="1">Nucleus</location>
    </subcellularLocation>
    <text evidence="1">Preferentially localized to the nucleus.</text>
</comment>
<comment type="similarity">
    <text evidence="1">Belongs to the WD repeat CIA1 family.</text>
</comment>